<dbReference type="EMBL" id="AM902716">
    <property type="protein sequence ID" value="CAP41940.1"/>
    <property type="molecule type" value="Genomic_DNA"/>
</dbReference>
<dbReference type="SMR" id="A9IGI5"/>
<dbReference type="STRING" id="94624.Bpet1601"/>
<dbReference type="KEGG" id="bpt:Bpet1601"/>
<dbReference type="eggNOG" id="COG3022">
    <property type="taxonomic scope" value="Bacteria"/>
</dbReference>
<dbReference type="Proteomes" id="UP000001225">
    <property type="component" value="Chromosome"/>
</dbReference>
<dbReference type="GO" id="GO:0005829">
    <property type="term" value="C:cytosol"/>
    <property type="evidence" value="ECO:0007669"/>
    <property type="project" value="TreeGrafter"/>
</dbReference>
<dbReference type="GO" id="GO:0033194">
    <property type="term" value="P:response to hydroperoxide"/>
    <property type="evidence" value="ECO:0007669"/>
    <property type="project" value="TreeGrafter"/>
</dbReference>
<dbReference type="HAMAP" id="MF_00652">
    <property type="entry name" value="UPF0246"/>
    <property type="match status" value="1"/>
</dbReference>
<dbReference type="InterPro" id="IPR005583">
    <property type="entry name" value="YaaA"/>
</dbReference>
<dbReference type="NCBIfam" id="NF002541">
    <property type="entry name" value="PRK02101.1-1"/>
    <property type="match status" value="1"/>
</dbReference>
<dbReference type="NCBIfam" id="NF002542">
    <property type="entry name" value="PRK02101.1-3"/>
    <property type="match status" value="1"/>
</dbReference>
<dbReference type="PANTHER" id="PTHR30283:SF4">
    <property type="entry name" value="PEROXIDE STRESS RESISTANCE PROTEIN YAAA"/>
    <property type="match status" value="1"/>
</dbReference>
<dbReference type="PANTHER" id="PTHR30283">
    <property type="entry name" value="PEROXIDE STRESS RESPONSE PROTEIN YAAA"/>
    <property type="match status" value="1"/>
</dbReference>
<dbReference type="Pfam" id="PF03883">
    <property type="entry name" value="H2O2_YaaD"/>
    <property type="match status" value="1"/>
</dbReference>
<proteinExistence type="inferred from homology"/>
<organism>
    <name type="scientific">Bordetella petrii (strain ATCC BAA-461 / DSM 12804 / CCUG 43448)</name>
    <dbReference type="NCBI Taxonomy" id="340100"/>
    <lineage>
        <taxon>Bacteria</taxon>
        <taxon>Pseudomonadati</taxon>
        <taxon>Pseudomonadota</taxon>
        <taxon>Betaproteobacteria</taxon>
        <taxon>Burkholderiales</taxon>
        <taxon>Alcaligenaceae</taxon>
        <taxon>Bordetella</taxon>
    </lineage>
</organism>
<accession>A9IGI5</accession>
<feature type="chain" id="PRO_1000131100" description="UPF0246 protein Bpet1601">
    <location>
        <begin position="1"/>
        <end position="256"/>
    </location>
</feature>
<protein>
    <recommendedName>
        <fullName evidence="1">UPF0246 protein Bpet1601</fullName>
    </recommendedName>
</protein>
<comment type="similarity">
    <text evidence="1">Belongs to the UPF0246 family.</text>
</comment>
<gene>
    <name type="ordered locus">Bpet1601</name>
</gene>
<sequence>MLFLLSPAKKLDYDTPVHVEHHTQPLFVEQSAALIKVLKTLSADDVAALMSLSPALAELNVARYAAWSRKFTQHNARQAVLAFNGDVYEGLQAGSLSPARLDWAQEHVAILSGLYGVLRPLDLMQPYRLEMGTRLATPKGKNLYEFWGSTIADYLNERLAGQKTPIVVNLASEEYFKSVDLKVLKARVVQCVFQDWKNGAWKVISFHAKRARGLMARYAIEHKVAKPEGLQKFDSEGYAFDASASSADKLVFRRKA</sequence>
<reference key="1">
    <citation type="journal article" date="2008" name="BMC Genomics">
        <title>The missing link: Bordetella petrii is endowed with both the metabolic versatility of environmental bacteria and virulence traits of pathogenic Bordetellae.</title>
        <authorList>
            <person name="Gross R."/>
            <person name="Guzman C.A."/>
            <person name="Sebaihia M."/>
            <person name="Martin dos Santos V.A.P."/>
            <person name="Pieper D.H."/>
            <person name="Koebnik R."/>
            <person name="Lechner M."/>
            <person name="Bartels D."/>
            <person name="Buhrmester J."/>
            <person name="Choudhuri J.V."/>
            <person name="Ebensen T."/>
            <person name="Gaigalat L."/>
            <person name="Herrmann S."/>
            <person name="Khachane A.N."/>
            <person name="Larisch C."/>
            <person name="Link S."/>
            <person name="Linke B."/>
            <person name="Meyer F."/>
            <person name="Mormann S."/>
            <person name="Nakunst D."/>
            <person name="Rueckert C."/>
            <person name="Schneiker-Bekel S."/>
            <person name="Schulze K."/>
            <person name="Voerholter F.-J."/>
            <person name="Yevsa T."/>
            <person name="Engle J.T."/>
            <person name="Goldman W.E."/>
            <person name="Puehler A."/>
            <person name="Goebel U.B."/>
            <person name="Goesmann A."/>
            <person name="Bloecker H."/>
            <person name="Kaiser O."/>
            <person name="Martinez-Arias R."/>
        </authorList>
    </citation>
    <scope>NUCLEOTIDE SEQUENCE [LARGE SCALE GENOMIC DNA]</scope>
    <source>
        <strain>ATCC BAA-461 / DSM 12804 / CCUG 43448</strain>
    </source>
</reference>
<name>Y1601_BORPD</name>
<evidence type="ECO:0000255" key="1">
    <source>
        <dbReference type="HAMAP-Rule" id="MF_00652"/>
    </source>
</evidence>